<organism>
    <name type="scientific">Picosynechococcus sp. (strain ATCC 27264 / PCC 7002 / PR-6)</name>
    <name type="common">Agmenellum quadruplicatum</name>
    <dbReference type="NCBI Taxonomy" id="32049"/>
    <lineage>
        <taxon>Bacteria</taxon>
        <taxon>Bacillati</taxon>
        <taxon>Cyanobacteriota</taxon>
        <taxon>Cyanophyceae</taxon>
        <taxon>Oscillatoriophycideae</taxon>
        <taxon>Chroococcales</taxon>
        <taxon>Geminocystaceae</taxon>
        <taxon>Picosynechococcus</taxon>
    </lineage>
</organism>
<comment type="function">
    <text evidence="1">Required for H(+) efflux immediately after light irradiation to form a rapid H(+) concentration gradient across the thylakoid membranes. Together with PxcL, contributes to transient H(+) uptake following dark to light transition.</text>
</comment>
<comment type="subcellular location">
    <subcellularLocation>
        <location evidence="1">Cell inner membrane</location>
        <topology evidence="1">Multi-pass membrane protein</topology>
    </subcellularLocation>
</comment>
<comment type="similarity">
    <text evidence="1">Belongs to the CemA family.</text>
</comment>
<proteinExistence type="inferred from homology"/>
<evidence type="ECO:0000255" key="1">
    <source>
        <dbReference type="HAMAP-Rule" id="MF_01308"/>
    </source>
</evidence>
<evidence type="ECO:0000256" key="2">
    <source>
        <dbReference type="SAM" id="MobiDB-lite"/>
    </source>
</evidence>
<dbReference type="EMBL" id="CP000951">
    <property type="protein sequence ID" value="ACB00768.1"/>
    <property type="molecule type" value="Genomic_DNA"/>
</dbReference>
<dbReference type="RefSeq" id="WP_012308386.1">
    <property type="nucleotide sequence ID" value="NZ_JAHHPU010000014.1"/>
</dbReference>
<dbReference type="SMR" id="B1XN58"/>
<dbReference type="STRING" id="32049.SYNPCC7002_A2799"/>
<dbReference type="KEGG" id="syp:SYNPCC7002_A2799"/>
<dbReference type="eggNOG" id="ENOG502Z8DN">
    <property type="taxonomic scope" value="Bacteria"/>
</dbReference>
<dbReference type="HOGENOM" id="CLU_690401_0_0_3"/>
<dbReference type="Proteomes" id="UP000001688">
    <property type="component" value="Chromosome"/>
</dbReference>
<dbReference type="GO" id="GO:0005886">
    <property type="term" value="C:plasma membrane"/>
    <property type="evidence" value="ECO:0007669"/>
    <property type="project" value="UniProtKB-SubCell"/>
</dbReference>
<dbReference type="GO" id="GO:0015078">
    <property type="term" value="F:proton transmembrane transporter activity"/>
    <property type="evidence" value="ECO:0007669"/>
    <property type="project" value="UniProtKB-UniRule"/>
</dbReference>
<dbReference type="HAMAP" id="MF_01308">
    <property type="entry name" value="CemA_PxcA"/>
    <property type="match status" value="1"/>
</dbReference>
<dbReference type="InterPro" id="IPR004282">
    <property type="entry name" value="CemA"/>
</dbReference>
<dbReference type="NCBIfam" id="NF002703">
    <property type="entry name" value="PRK02507.1-1"/>
    <property type="match status" value="1"/>
</dbReference>
<dbReference type="PANTHER" id="PTHR33650:SF2">
    <property type="entry name" value="CHLOROPLAST ENVELOPE MEMBRANE PROTEIN"/>
    <property type="match status" value="1"/>
</dbReference>
<dbReference type="PANTHER" id="PTHR33650">
    <property type="entry name" value="CHLOROPLAST ENVELOPE MEMBRANE PROTEIN-RELATED"/>
    <property type="match status" value="1"/>
</dbReference>
<dbReference type="Pfam" id="PF03040">
    <property type="entry name" value="CemA"/>
    <property type="match status" value="1"/>
</dbReference>
<sequence>MNLSTFIKKARRWFYDTPDRALEQAYRAALNIQAIELEHFGGKPVSGHNADYSDSVIRYFQGEVRKQLKIIEVRLREFRSFNTVVPVSEETIQKKASNIYYPDAADKPTLIIEKLRFIDEITGRYGRGLSKQSVALVPLNGPEAPQTNGDRPDNKPKVETVSDKTGLVPRSIMRTFSRIQREIDPKSNEAEAEVVTKFRRSRNKTAVSIRFLLTLVIVPLLVHQLAKIAITPFVEEHFFTEASPALFVNSDLENEAFEELEHYRATLEMRQLVGLAPALTEVEITEKIQEKATEIAQDYRAESYNAYENIFSDIFSFFAFVGILLISKREIAMLKGFLDEIVYGLSDSAKAFLIILFTDIFVGYHSPHGWEIILENVAKHFGIAESRDFNFLFIATFPVILDTVLKYWIFRYLNRISPSAVATYRNMNE</sequence>
<reference key="1">
    <citation type="submission" date="2008-02" db="EMBL/GenBank/DDBJ databases">
        <title>Complete sequence of Synechococcus sp. PCC 7002.</title>
        <authorList>
            <person name="Li T."/>
            <person name="Zhao J."/>
            <person name="Zhao C."/>
            <person name="Liu Z."/>
            <person name="Zhao F."/>
            <person name="Marquardt J."/>
            <person name="Nomura C.T."/>
            <person name="Persson S."/>
            <person name="Detter J.C."/>
            <person name="Richardson P.M."/>
            <person name="Lanz C."/>
            <person name="Schuster S.C."/>
            <person name="Wang J."/>
            <person name="Li S."/>
            <person name="Huang X."/>
            <person name="Cai T."/>
            <person name="Yu Z."/>
            <person name="Luo J."/>
            <person name="Zhao J."/>
            <person name="Bryant D.A."/>
        </authorList>
    </citation>
    <scope>NUCLEOTIDE SEQUENCE [LARGE SCALE GENOMIC DNA]</scope>
    <source>
        <strain>ATCC 27264 / PCC 7002 / PR-6</strain>
    </source>
</reference>
<feature type="chain" id="PRO_0000346537" description="Proton extrusion protein PxcA">
    <location>
        <begin position="1"/>
        <end position="429"/>
    </location>
</feature>
<feature type="transmembrane region" description="Helical" evidence="1">
    <location>
        <begin position="211"/>
        <end position="231"/>
    </location>
</feature>
<feature type="transmembrane region" description="Helical" evidence="1">
    <location>
        <begin position="306"/>
        <end position="326"/>
    </location>
</feature>
<feature type="transmembrane region" description="Helical" evidence="1">
    <location>
        <begin position="353"/>
        <end position="373"/>
    </location>
</feature>
<feature type="transmembrane region" description="Helical" evidence="1">
    <location>
        <begin position="389"/>
        <end position="409"/>
    </location>
</feature>
<feature type="region of interest" description="Disordered" evidence="2">
    <location>
        <begin position="139"/>
        <end position="161"/>
    </location>
</feature>
<feature type="compositionally biased region" description="Basic and acidic residues" evidence="2">
    <location>
        <begin position="150"/>
        <end position="161"/>
    </location>
</feature>
<name>PXCA_PICP2</name>
<keyword id="KW-0997">Cell inner membrane</keyword>
<keyword id="KW-1003">Cell membrane</keyword>
<keyword id="KW-0375">Hydrogen ion transport</keyword>
<keyword id="KW-0406">Ion transport</keyword>
<keyword id="KW-0472">Membrane</keyword>
<keyword id="KW-1185">Reference proteome</keyword>
<keyword id="KW-0812">Transmembrane</keyword>
<keyword id="KW-1133">Transmembrane helix</keyword>
<keyword id="KW-0813">Transport</keyword>
<accession>B1XN58</accession>
<gene>
    <name evidence="1" type="primary">pxcA</name>
    <name type="ordered locus">SYNPCC7002_A2799</name>
</gene>
<protein>
    <recommendedName>
        <fullName evidence="1">Proton extrusion protein PxcA</fullName>
    </recommendedName>
</protein>